<keyword id="KW-1003">Cell membrane</keyword>
<keyword id="KW-0350">Heme biosynthesis</keyword>
<keyword id="KW-0408">Iron</keyword>
<keyword id="KW-0472">Membrane</keyword>
<keyword id="KW-0479">Metal-binding</keyword>
<keyword id="KW-0560">Oxidoreductase</keyword>
<keyword id="KW-0812">Transmembrane</keyword>
<keyword id="KW-1133">Transmembrane helix</keyword>
<sequence>MAVANLTTEQAILTEVRKQNRNRRALRLWLGFVLLALFCLVLVGGATRLTNSGLSITEWKPIHGVIPPLSAAEWDEEFRLYQRIPEFQQLNSAMTVDEFKGIFWWEWAHRLIARGIGVIFALPLIFFWLTGRIEKRLRWPLVGILALGGLQGFIGWWMVSSGLSVRTDVSQYRLATHLVMACLIFAGCMWIMRGLSPHSNDPAPARSSRGFAAAIAIFALFQIYLGALVAGLDAGFSYNTWPLMDGAVIPSDLLIQQPFWINAFENPKTVQFIHRIGAYTLFALTLINMVIALRAAPWTTHARRAVVLFSLVTLQAAIGIATLLMQVPLHWGLLHQAGALVVFGFAVANWRGFYGEYPHATAIAERD</sequence>
<name>CTAA_RHIE6</name>
<organism>
    <name type="scientific">Rhizobium etli (strain CIAT 652)</name>
    <dbReference type="NCBI Taxonomy" id="491916"/>
    <lineage>
        <taxon>Bacteria</taxon>
        <taxon>Pseudomonadati</taxon>
        <taxon>Pseudomonadota</taxon>
        <taxon>Alphaproteobacteria</taxon>
        <taxon>Hyphomicrobiales</taxon>
        <taxon>Rhizobiaceae</taxon>
        <taxon>Rhizobium/Agrobacterium group</taxon>
        <taxon>Rhizobium</taxon>
    </lineage>
</organism>
<protein>
    <recommendedName>
        <fullName evidence="1">Heme A synthase</fullName>
        <shortName evidence="1">HAS</shortName>
        <ecNumber evidence="1">1.17.99.9</ecNumber>
    </recommendedName>
    <alternativeName>
        <fullName evidence="1">Cytochrome aa3-controlling protein</fullName>
    </alternativeName>
</protein>
<feature type="chain" id="PRO_1000187254" description="Heme A synthase">
    <location>
        <begin position="1"/>
        <end position="367"/>
    </location>
</feature>
<feature type="transmembrane region" description="Helical" evidence="1">
    <location>
        <begin position="25"/>
        <end position="45"/>
    </location>
</feature>
<feature type="transmembrane region" description="Helical" evidence="1">
    <location>
        <begin position="111"/>
        <end position="131"/>
    </location>
</feature>
<feature type="transmembrane region" description="Helical" evidence="1">
    <location>
        <begin position="139"/>
        <end position="159"/>
    </location>
</feature>
<feature type="transmembrane region" description="Helical" evidence="1">
    <location>
        <begin position="174"/>
        <end position="194"/>
    </location>
</feature>
<feature type="transmembrane region" description="Helical" evidence="1">
    <location>
        <begin position="210"/>
        <end position="230"/>
    </location>
</feature>
<feature type="transmembrane region" description="Helical" evidence="1">
    <location>
        <begin position="276"/>
        <end position="296"/>
    </location>
</feature>
<feature type="transmembrane region" description="Helical" evidence="1">
    <location>
        <begin position="305"/>
        <end position="325"/>
    </location>
</feature>
<feature type="transmembrane region" description="Helical" evidence="1">
    <location>
        <begin position="327"/>
        <end position="347"/>
    </location>
</feature>
<feature type="binding site" description="axial binding residue" evidence="1">
    <location>
        <position position="274"/>
    </location>
    <ligand>
        <name>heme</name>
        <dbReference type="ChEBI" id="CHEBI:30413"/>
    </ligand>
    <ligandPart>
        <name>Fe</name>
        <dbReference type="ChEBI" id="CHEBI:18248"/>
    </ligandPart>
</feature>
<feature type="binding site" description="axial binding residue" evidence="1">
    <location>
        <position position="335"/>
    </location>
    <ligand>
        <name>heme</name>
        <dbReference type="ChEBI" id="CHEBI:30413"/>
    </ligand>
    <ligandPart>
        <name>Fe</name>
        <dbReference type="ChEBI" id="CHEBI:18248"/>
    </ligandPart>
</feature>
<dbReference type="EC" id="1.17.99.9" evidence="1"/>
<dbReference type="EMBL" id="CP001074">
    <property type="protein sequence ID" value="ACE90611.1"/>
    <property type="molecule type" value="Genomic_DNA"/>
</dbReference>
<dbReference type="SMR" id="B3PVH0"/>
<dbReference type="KEGG" id="rec:RHECIAT_CH0001634"/>
<dbReference type="eggNOG" id="COG1612">
    <property type="taxonomic scope" value="Bacteria"/>
</dbReference>
<dbReference type="HOGENOM" id="CLU_017627_0_0_5"/>
<dbReference type="UniPathway" id="UPA00269">
    <property type="reaction ID" value="UER00713"/>
</dbReference>
<dbReference type="Proteomes" id="UP000008817">
    <property type="component" value="Chromosome"/>
</dbReference>
<dbReference type="GO" id="GO:0005886">
    <property type="term" value="C:plasma membrane"/>
    <property type="evidence" value="ECO:0007669"/>
    <property type="project" value="UniProtKB-SubCell"/>
</dbReference>
<dbReference type="GO" id="GO:0046872">
    <property type="term" value="F:metal ion binding"/>
    <property type="evidence" value="ECO:0007669"/>
    <property type="project" value="UniProtKB-KW"/>
</dbReference>
<dbReference type="GO" id="GO:0016653">
    <property type="term" value="F:oxidoreductase activity, acting on NAD(P)H, heme protein as acceptor"/>
    <property type="evidence" value="ECO:0007669"/>
    <property type="project" value="InterPro"/>
</dbReference>
<dbReference type="GO" id="GO:0006784">
    <property type="term" value="P:heme A biosynthetic process"/>
    <property type="evidence" value="ECO:0007669"/>
    <property type="project" value="UniProtKB-UniRule"/>
</dbReference>
<dbReference type="HAMAP" id="MF_01665">
    <property type="entry name" value="HemeA_synth_type2"/>
    <property type="match status" value="1"/>
</dbReference>
<dbReference type="InterPro" id="IPR003780">
    <property type="entry name" value="COX15/CtaA_fam"/>
</dbReference>
<dbReference type="InterPro" id="IPR023754">
    <property type="entry name" value="HemeA_Synthase_type2"/>
</dbReference>
<dbReference type="PANTHER" id="PTHR23289">
    <property type="entry name" value="CYTOCHROME C OXIDASE ASSEMBLY PROTEIN COX15"/>
    <property type="match status" value="1"/>
</dbReference>
<dbReference type="PANTHER" id="PTHR23289:SF2">
    <property type="entry name" value="CYTOCHROME C OXIDASE ASSEMBLY PROTEIN COX15 HOMOLOG"/>
    <property type="match status" value="1"/>
</dbReference>
<dbReference type="Pfam" id="PF02628">
    <property type="entry name" value="COX15-CtaA"/>
    <property type="match status" value="1"/>
</dbReference>
<comment type="function">
    <text evidence="1">Catalyzes the conversion of heme O to heme A by two successive hydroxylations of the methyl group at C8. The first hydroxylation forms heme I, the second hydroxylation results in an unstable dihydroxymethyl group, which spontaneously dehydrates, resulting in the formyl group of heme A.</text>
</comment>
<comment type="catalytic activity">
    <reaction evidence="1">
        <text>Fe(II)-heme o + 2 A + H2O = Fe(II)-heme a + 2 AH2</text>
        <dbReference type="Rhea" id="RHEA:63388"/>
        <dbReference type="ChEBI" id="CHEBI:13193"/>
        <dbReference type="ChEBI" id="CHEBI:15377"/>
        <dbReference type="ChEBI" id="CHEBI:17499"/>
        <dbReference type="ChEBI" id="CHEBI:60530"/>
        <dbReference type="ChEBI" id="CHEBI:61715"/>
        <dbReference type="EC" id="1.17.99.9"/>
    </reaction>
    <physiologicalReaction direction="left-to-right" evidence="1">
        <dbReference type="Rhea" id="RHEA:63389"/>
    </physiologicalReaction>
</comment>
<comment type="cofactor">
    <cofactor evidence="1">
        <name>heme b</name>
        <dbReference type="ChEBI" id="CHEBI:60344"/>
    </cofactor>
</comment>
<comment type="pathway">
    <text evidence="1">Porphyrin-containing compound metabolism; heme A biosynthesis; heme A from heme O: step 1/1.</text>
</comment>
<comment type="subunit">
    <text evidence="1">Interacts with CtaB.</text>
</comment>
<comment type="subcellular location">
    <subcellularLocation>
        <location evidence="1">Cell membrane</location>
        <topology evidence="1">Multi-pass membrane protein</topology>
    </subcellularLocation>
</comment>
<comment type="similarity">
    <text evidence="1">Belongs to the COX15/CtaA family. Type 2 subfamily.</text>
</comment>
<proteinExistence type="inferred from homology"/>
<accession>B3PVH0</accession>
<evidence type="ECO:0000255" key="1">
    <source>
        <dbReference type="HAMAP-Rule" id="MF_01665"/>
    </source>
</evidence>
<gene>
    <name evidence="1" type="primary">ctaA</name>
    <name type="ordered locus">RHECIAT_CH0001634</name>
</gene>
<reference key="1">
    <citation type="journal article" date="2010" name="Appl. Environ. Microbiol.">
        <title>Conserved symbiotic plasmid DNA sequences in the multireplicon pangenomic structure of Rhizobium etli.</title>
        <authorList>
            <person name="Gonzalez V."/>
            <person name="Acosta J.L."/>
            <person name="Santamaria R.I."/>
            <person name="Bustos P."/>
            <person name="Fernandez J.L."/>
            <person name="Hernandez Gonzalez I.L."/>
            <person name="Diaz R."/>
            <person name="Flores M."/>
            <person name="Palacios R."/>
            <person name="Mora J."/>
            <person name="Davila G."/>
        </authorList>
    </citation>
    <scope>NUCLEOTIDE SEQUENCE [LARGE SCALE GENOMIC DNA]</scope>
    <source>
        <strain>CIAT 652</strain>
    </source>
</reference>